<accession>P56610</accession>
<evidence type="ECO:0000255" key="1">
    <source>
        <dbReference type="PROSITE-ProRule" id="PRU01210"/>
    </source>
</evidence>
<evidence type="ECO:0000305" key="2"/>
<comment type="function">
    <text>Not toxic to mice.</text>
</comment>
<comment type="subcellular location">
    <subcellularLocation>
        <location>Secreted</location>
    </subcellularLocation>
</comment>
<comment type="tissue specificity">
    <text>Expressed by the venom gland.</text>
</comment>
<comment type="domain">
    <text evidence="2">Has the structural arrangement of an alpha-helix connected to antiparallel beta-sheets by disulfide bonds (CS-alpha/beta).</text>
</comment>
<comment type="similarity">
    <text evidence="2">Belongs to the long (4 C-C) scorpion toxin superfamily. Sodium channel inhibitor family. Alpha subfamily.</text>
</comment>
<feature type="chain" id="PRO_0000066795" description="Toxin Tb4">
    <location>
        <begin position="1"/>
        <end position="19" status="greater than"/>
    </location>
</feature>
<feature type="domain" description="LCN-type CS-alpha/beta" evidence="1">
    <location>
        <begin position="2"/>
        <end position="19" status="greater than"/>
    </location>
</feature>
<feature type="non-terminal residue">
    <location>
        <position position="19"/>
    </location>
</feature>
<dbReference type="PIR" id="S62864">
    <property type="entry name" value="S62864"/>
</dbReference>
<dbReference type="GO" id="GO:0005576">
    <property type="term" value="C:extracellular region"/>
    <property type="evidence" value="ECO:0007669"/>
    <property type="project" value="UniProtKB-SubCell"/>
</dbReference>
<dbReference type="GO" id="GO:0008200">
    <property type="term" value="F:ion channel inhibitor activity"/>
    <property type="evidence" value="ECO:0007669"/>
    <property type="project" value="InterPro"/>
</dbReference>
<dbReference type="InterPro" id="IPR044062">
    <property type="entry name" value="LCN-type_CS_alpha_beta_dom"/>
</dbReference>
<dbReference type="PROSITE" id="PS51863">
    <property type="entry name" value="LCN_CSAB"/>
    <property type="match status" value="1"/>
</dbReference>
<keyword id="KW-0903">Direct protein sequencing</keyword>
<keyword id="KW-0964">Secreted</keyword>
<reference key="1">
    <citation type="journal article" date="1996" name="Biochem. J.">
        <title>Toxic peptides and genes encoding toxin gamma of the Brazilian scorpions Tityus bahiensis and Tityus stigmurus.</title>
        <authorList>
            <person name="Becerril B."/>
            <person name="Corona M."/>
            <person name="Coronas F.I."/>
            <person name="Zamudio F.Z."/>
            <person name="Calderon-Aranda E.S."/>
            <person name="Fletcher P.L. Jr."/>
            <person name="Martin B.M."/>
            <person name="Possani L.D."/>
        </authorList>
    </citation>
    <scope>PROTEIN SEQUENCE</scope>
    <source>
        <tissue>Venom</tissue>
    </source>
</reference>
<organism>
    <name type="scientific">Tityus bahiensis</name>
    <name type="common">Brazilian scorpion</name>
    <dbReference type="NCBI Taxonomy" id="50343"/>
    <lineage>
        <taxon>Eukaryota</taxon>
        <taxon>Metazoa</taxon>
        <taxon>Ecdysozoa</taxon>
        <taxon>Arthropoda</taxon>
        <taxon>Chelicerata</taxon>
        <taxon>Arachnida</taxon>
        <taxon>Scorpiones</taxon>
        <taxon>Buthida</taxon>
        <taxon>Buthoidea</taxon>
        <taxon>Buthidae</taxon>
        <taxon>Tityus</taxon>
    </lineage>
</organism>
<protein>
    <recommendedName>
        <fullName>Toxin Tb4</fullName>
    </recommendedName>
    <alternativeName>
        <fullName>TbTx-VI</fullName>
    </alternativeName>
    <alternativeName>
        <fullName>TbTx6</fullName>
    </alternativeName>
</protein>
<proteinExistence type="evidence at protein level"/>
<name>SCX4_TITBA</name>
<sequence>GKEGYPTDKRGCKLTCFFT</sequence>